<comment type="function">
    <text>Binds to sodium channels (Nav) and inhibits the inactivation of the activated channels, thereby blocking neuronal transmission. This toxin is active against mammals.</text>
</comment>
<comment type="subcellular location">
    <subcellularLocation>
        <location>Secreted</location>
    </subcellularLocation>
</comment>
<comment type="tissue specificity">
    <text>Expressed by the venom gland.</text>
</comment>
<comment type="domain">
    <text evidence="3">Has the structural arrangement of an alpha-helix connected to antiparallel beta-sheets by disulfide bonds (CS-alpha/beta).</text>
</comment>
<comment type="toxic dose">
    <text evidence="2">LD(50) is 2.25 mg/kg in mice by subcutaneous injection.</text>
</comment>
<comment type="similarity">
    <text evidence="3">Belongs to the long (4 C-C) scorpion toxin superfamily. Sodium channel inhibitor family. Alpha subfamily.</text>
</comment>
<dbReference type="PIR" id="A53357">
    <property type="entry name" value="A53357"/>
</dbReference>
<dbReference type="GO" id="GO:0005576">
    <property type="term" value="C:extracellular region"/>
    <property type="evidence" value="ECO:0007669"/>
    <property type="project" value="UniProtKB-SubCell"/>
</dbReference>
<dbReference type="GO" id="GO:0008200">
    <property type="term" value="F:ion channel inhibitor activity"/>
    <property type="evidence" value="ECO:0007669"/>
    <property type="project" value="InterPro"/>
</dbReference>
<dbReference type="GO" id="GO:0017080">
    <property type="term" value="F:sodium channel regulator activity"/>
    <property type="evidence" value="ECO:0007669"/>
    <property type="project" value="UniProtKB-KW"/>
</dbReference>
<dbReference type="GO" id="GO:0090729">
    <property type="term" value="F:toxin activity"/>
    <property type="evidence" value="ECO:0007669"/>
    <property type="project" value="UniProtKB-KW"/>
</dbReference>
<dbReference type="InterPro" id="IPR044062">
    <property type="entry name" value="LCN-type_CS_alpha_beta_dom"/>
</dbReference>
<dbReference type="PROSITE" id="PS51863">
    <property type="entry name" value="LCN_CSAB"/>
    <property type="match status" value="1"/>
</dbReference>
<sequence length="24" mass="2686">EDGYLLNRDTGCKVSCGTCRYCND</sequence>
<name>SCX2_HOTTA</name>
<feature type="chain" id="PRO_0000066758" description="Neurotoxin-2">
    <location>
        <begin position="1"/>
        <end position="24" status="greater than"/>
    </location>
</feature>
<feature type="domain" description="LCN-type CS-alpha/beta" evidence="1">
    <location>
        <begin position="1"/>
        <end position="24" status="greater than"/>
    </location>
</feature>
<feature type="non-terminal residue">
    <location>
        <position position="24"/>
    </location>
</feature>
<protein>
    <recommendedName>
        <fullName>Neurotoxin-2</fullName>
    </recommendedName>
    <alternativeName>
        <fullName>BT-II</fullName>
    </alternativeName>
    <alternativeName>
        <fullName>Neurotoxin II</fullName>
    </alternativeName>
</protein>
<proteinExistence type="evidence at protein level"/>
<organism>
    <name type="scientific">Hottentotta tamulus</name>
    <name type="common">Eastern Indian scorpion</name>
    <name type="synonym">Mesobuthus tamulus</name>
    <dbReference type="NCBI Taxonomy" id="34647"/>
    <lineage>
        <taxon>Eukaryota</taxon>
        <taxon>Metazoa</taxon>
        <taxon>Ecdysozoa</taxon>
        <taxon>Arthropoda</taxon>
        <taxon>Chelicerata</taxon>
        <taxon>Arachnida</taxon>
        <taxon>Scorpiones</taxon>
        <taxon>Buthida</taxon>
        <taxon>Buthoidea</taxon>
        <taxon>Buthidae</taxon>
        <taxon>Mesobuthus</taxon>
    </lineage>
</organism>
<evidence type="ECO:0000255" key="1">
    <source>
        <dbReference type="PROSITE-ProRule" id="PRU01210"/>
    </source>
</evidence>
<evidence type="ECO:0000269" key="2">
    <source>
    </source>
</evidence>
<evidence type="ECO:0000305" key="3"/>
<reference key="1">
    <citation type="journal article" date="1994" name="Toxicon">
        <title>Purification, N-terminal sequence and structural characterization of a toxic protein from the Indian scorpion venom Buthus tamulus.</title>
        <authorList>
            <person name="Lala K."/>
            <person name="Narayanan P."/>
        </authorList>
    </citation>
    <scope>PROTEIN SEQUENCE</scope>
    <scope>TOXIC DOSE</scope>
    <source>
        <tissue>Venom</tissue>
    </source>
</reference>
<accession>P45668</accession>
<keyword id="KW-0903">Direct protein sequencing</keyword>
<keyword id="KW-0872">Ion channel impairing toxin</keyword>
<keyword id="KW-0528">Neurotoxin</keyword>
<keyword id="KW-0964">Secreted</keyword>
<keyword id="KW-0800">Toxin</keyword>
<keyword id="KW-0738">Voltage-gated sodium channel impairing toxin</keyword>